<evidence type="ECO:0000255" key="1">
    <source>
        <dbReference type="HAMAP-Rule" id="MF_00104"/>
    </source>
</evidence>
<reference key="1">
    <citation type="journal article" date="2009" name="PLoS Genet.">
        <title>Organised genome dynamics in the Escherichia coli species results in highly diverse adaptive paths.</title>
        <authorList>
            <person name="Touchon M."/>
            <person name="Hoede C."/>
            <person name="Tenaillon O."/>
            <person name="Barbe V."/>
            <person name="Baeriswyl S."/>
            <person name="Bidet P."/>
            <person name="Bingen E."/>
            <person name="Bonacorsi S."/>
            <person name="Bouchier C."/>
            <person name="Bouvet O."/>
            <person name="Calteau A."/>
            <person name="Chiapello H."/>
            <person name="Clermont O."/>
            <person name="Cruveiller S."/>
            <person name="Danchin A."/>
            <person name="Diard M."/>
            <person name="Dossat C."/>
            <person name="Karoui M.E."/>
            <person name="Frapy E."/>
            <person name="Garry L."/>
            <person name="Ghigo J.M."/>
            <person name="Gilles A.M."/>
            <person name="Johnson J."/>
            <person name="Le Bouguenec C."/>
            <person name="Lescat M."/>
            <person name="Mangenot S."/>
            <person name="Martinez-Jehanne V."/>
            <person name="Matic I."/>
            <person name="Nassif X."/>
            <person name="Oztas S."/>
            <person name="Petit M.A."/>
            <person name="Pichon C."/>
            <person name="Rouy Z."/>
            <person name="Ruf C.S."/>
            <person name="Schneider D."/>
            <person name="Tourret J."/>
            <person name="Vacherie B."/>
            <person name="Vallenet D."/>
            <person name="Medigue C."/>
            <person name="Rocha E.P.C."/>
            <person name="Denamur E."/>
        </authorList>
    </citation>
    <scope>NUCLEOTIDE SEQUENCE [LARGE SCALE GENOMIC DNA]</scope>
    <source>
        <strain>IAI39 / ExPEC</strain>
    </source>
</reference>
<proteinExistence type="inferred from homology"/>
<gene>
    <name evidence="1" type="primary">rnc</name>
    <name type="ordered locus">ECIAI39_2772</name>
</gene>
<sequence length="226" mass="25550">MNPIVINRLQRKLGYTFNHQELLQQALTHRSASSKHNERLEFLGDSILSYVIANALYHRFPRVDEGDMSRMRATLVRGNTLAELAREFELGECLRLGPGELKSGGFRRESILADTVEALIGGVFLDSDIQTVEKLILNWYQTRLDEISPGDKQKDPKTRLQEYLQGRHLPLPTYLVVQVRGEAHDQEFTIHCQVSGLSEPVVGTGSSRRKAEQAAAEQALKKLELE</sequence>
<accession>B7NRM0</accession>
<keyword id="KW-0963">Cytoplasm</keyword>
<keyword id="KW-0255">Endonuclease</keyword>
<keyword id="KW-0378">Hydrolase</keyword>
<keyword id="KW-0460">Magnesium</keyword>
<keyword id="KW-0479">Metal-binding</keyword>
<keyword id="KW-0507">mRNA processing</keyword>
<keyword id="KW-0540">Nuclease</keyword>
<keyword id="KW-0694">RNA-binding</keyword>
<keyword id="KW-0698">rRNA processing</keyword>
<keyword id="KW-0699">rRNA-binding</keyword>
<keyword id="KW-0819">tRNA processing</keyword>
<comment type="function">
    <text evidence="1">Digests double-stranded RNA. Involved in the processing of primary rRNA transcript to yield the immediate precursors to the large and small rRNAs (23S and 16S). Processes some mRNAs, and tRNAs when they are encoded in the rRNA operon. Processes pre-crRNA and tracrRNA of type II CRISPR loci if present in the organism.</text>
</comment>
<comment type="catalytic activity">
    <reaction evidence="1">
        <text>Endonucleolytic cleavage to 5'-phosphomonoester.</text>
        <dbReference type="EC" id="3.1.26.3"/>
    </reaction>
</comment>
<comment type="cofactor">
    <cofactor evidence="1">
        <name>Mg(2+)</name>
        <dbReference type="ChEBI" id="CHEBI:18420"/>
    </cofactor>
</comment>
<comment type="subunit">
    <text evidence="1">Homodimer.</text>
</comment>
<comment type="subcellular location">
    <subcellularLocation>
        <location evidence="1">Cytoplasm</location>
    </subcellularLocation>
</comment>
<comment type="similarity">
    <text evidence="1">Belongs to the ribonuclease III family.</text>
</comment>
<protein>
    <recommendedName>
        <fullName evidence="1">Ribonuclease 3</fullName>
        <ecNumber evidence="1">3.1.26.3</ecNumber>
    </recommendedName>
    <alternativeName>
        <fullName evidence="1">Ribonuclease III</fullName>
        <shortName evidence="1">RNase III</shortName>
    </alternativeName>
</protein>
<organism>
    <name type="scientific">Escherichia coli O7:K1 (strain IAI39 / ExPEC)</name>
    <dbReference type="NCBI Taxonomy" id="585057"/>
    <lineage>
        <taxon>Bacteria</taxon>
        <taxon>Pseudomonadati</taxon>
        <taxon>Pseudomonadota</taxon>
        <taxon>Gammaproteobacteria</taxon>
        <taxon>Enterobacterales</taxon>
        <taxon>Enterobacteriaceae</taxon>
        <taxon>Escherichia</taxon>
    </lineage>
</organism>
<dbReference type="EC" id="3.1.26.3" evidence="1"/>
<dbReference type="EMBL" id="CU928164">
    <property type="protein sequence ID" value="CAR18894.1"/>
    <property type="molecule type" value="Genomic_DNA"/>
</dbReference>
<dbReference type="RefSeq" id="WP_001068343.1">
    <property type="nucleotide sequence ID" value="NC_011750.1"/>
</dbReference>
<dbReference type="RefSeq" id="YP_002408710.1">
    <property type="nucleotide sequence ID" value="NC_011750.1"/>
</dbReference>
<dbReference type="SMR" id="B7NRM0"/>
<dbReference type="STRING" id="585057.ECIAI39_2772"/>
<dbReference type="GeneID" id="93774524"/>
<dbReference type="KEGG" id="ect:ECIAI39_2772"/>
<dbReference type="PATRIC" id="fig|585057.6.peg.2880"/>
<dbReference type="HOGENOM" id="CLU_000907_1_1_6"/>
<dbReference type="Proteomes" id="UP000000749">
    <property type="component" value="Chromosome"/>
</dbReference>
<dbReference type="GO" id="GO:0005737">
    <property type="term" value="C:cytoplasm"/>
    <property type="evidence" value="ECO:0007669"/>
    <property type="project" value="UniProtKB-SubCell"/>
</dbReference>
<dbReference type="GO" id="GO:0003725">
    <property type="term" value="F:double-stranded RNA binding"/>
    <property type="evidence" value="ECO:0007669"/>
    <property type="project" value="TreeGrafter"/>
</dbReference>
<dbReference type="GO" id="GO:0046872">
    <property type="term" value="F:metal ion binding"/>
    <property type="evidence" value="ECO:0007669"/>
    <property type="project" value="UniProtKB-KW"/>
</dbReference>
<dbReference type="GO" id="GO:0004525">
    <property type="term" value="F:ribonuclease III activity"/>
    <property type="evidence" value="ECO:0007669"/>
    <property type="project" value="UniProtKB-UniRule"/>
</dbReference>
<dbReference type="GO" id="GO:0019843">
    <property type="term" value="F:rRNA binding"/>
    <property type="evidence" value="ECO:0007669"/>
    <property type="project" value="UniProtKB-KW"/>
</dbReference>
<dbReference type="GO" id="GO:0006397">
    <property type="term" value="P:mRNA processing"/>
    <property type="evidence" value="ECO:0007669"/>
    <property type="project" value="UniProtKB-UniRule"/>
</dbReference>
<dbReference type="GO" id="GO:0010468">
    <property type="term" value="P:regulation of gene expression"/>
    <property type="evidence" value="ECO:0007669"/>
    <property type="project" value="TreeGrafter"/>
</dbReference>
<dbReference type="GO" id="GO:0006364">
    <property type="term" value="P:rRNA processing"/>
    <property type="evidence" value="ECO:0007669"/>
    <property type="project" value="UniProtKB-UniRule"/>
</dbReference>
<dbReference type="GO" id="GO:0008033">
    <property type="term" value="P:tRNA processing"/>
    <property type="evidence" value="ECO:0007669"/>
    <property type="project" value="UniProtKB-KW"/>
</dbReference>
<dbReference type="CDD" id="cd10845">
    <property type="entry name" value="DSRM_RNAse_III_family"/>
    <property type="match status" value="1"/>
</dbReference>
<dbReference type="CDD" id="cd00593">
    <property type="entry name" value="RIBOc"/>
    <property type="match status" value="1"/>
</dbReference>
<dbReference type="FunFam" id="1.10.1520.10:FF:000001">
    <property type="entry name" value="Ribonuclease 3"/>
    <property type="match status" value="1"/>
</dbReference>
<dbReference type="FunFam" id="3.30.160.20:FF:000003">
    <property type="entry name" value="Ribonuclease 3"/>
    <property type="match status" value="1"/>
</dbReference>
<dbReference type="Gene3D" id="3.30.160.20">
    <property type="match status" value="1"/>
</dbReference>
<dbReference type="Gene3D" id="1.10.1520.10">
    <property type="entry name" value="Ribonuclease III domain"/>
    <property type="match status" value="1"/>
</dbReference>
<dbReference type="HAMAP" id="MF_00104">
    <property type="entry name" value="RNase_III"/>
    <property type="match status" value="1"/>
</dbReference>
<dbReference type="InterPro" id="IPR014720">
    <property type="entry name" value="dsRBD_dom"/>
</dbReference>
<dbReference type="InterPro" id="IPR011907">
    <property type="entry name" value="RNase_III"/>
</dbReference>
<dbReference type="InterPro" id="IPR000999">
    <property type="entry name" value="RNase_III_dom"/>
</dbReference>
<dbReference type="InterPro" id="IPR036389">
    <property type="entry name" value="RNase_III_sf"/>
</dbReference>
<dbReference type="NCBIfam" id="TIGR02191">
    <property type="entry name" value="RNaseIII"/>
    <property type="match status" value="1"/>
</dbReference>
<dbReference type="PANTHER" id="PTHR11207:SF0">
    <property type="entry name" value="RIBONUCLEASE 3"/>
    <property type="match status" value="1"/>
</dbReference>
<dbReference type="PANTHER" id="PTHR11207">
    <property type="entry name" value="RIBONUCLEASE III"/>
    <property type="match status" value="1"/>
</dbReference>
<dbReference type="Pfam" id="PF00035">
    <property type="entry name" value="dsrm"/>
    <property type="match status" value="1"/>
</dbReference>
<dbReference type="Pfam" id="PF14622">
    <property type="entry name" value="Ribonucleas_3_3"/>
    <property type="match status" value="1"/>
</dbReference>
<dbReference type="SMART" id="SM00358">
    <property type="entry name" value="DSRM"/>
    <property type="match status" value="1"/>
</dbReference>
<dbReference type="SMART" id="SM00535">
    <property type="entry name" value="RIBOc"/>
    <property type="match status" value="1"/>
</dbReference>
<dbReference type="SUPFAM" id="SSF54768">
    <property type="entry name" value="dsRNA-binding domain-like"/>
    <property type="match status" value="1"/>
</dbReference>
<dbReference type="SUPFAM" id="SSF69065">
    <property type="entry name" value="RNase III domain-like"/>
    <property type="match status" value="1"/>
</dbReference>
<dbReference type="PROSITE" id="PS50137">
    <property type="entry name" value="DS_RBD"/>
    <property type="match status" value="1"/>
</dbReference>
<dbReference type="PROSITE" id="PS00517">
    <property type="entry name" value="RNASE_3_1"/>
    <property type="match status" value="1"/>
</dbReference>
<dbReference type="PROSITE" id="PS50142">
    <property type="entry name" value="RNASE_3_2"/>
    <property type="match status" value="1"/>
</dbReference>
<name>RNC_ECO7I</name>
<feature type="chain" id="PRO_1000194426" description="Ribonuclease 3">
    <location>
        <begin position="1"/>
        <end position="226"/>
    </location>
</feature>
<feature type="domain" description="RNase III" evidence="1">
    <location>
        <begin position="6"/>
        <end position="128"/>
    </location>
</feature>
<feature type="domain" description="DRBM" evidence="1">
    <location>
        <begin position="155"/>
        <end position="225"/>
    </location>
</feature>
<feature type="active site" evidence="1">
    <location>
        <position position="45"/>
    </location>
</feature>
<feature type="active site" evidence="1">
    <location>
        <position position="117"/>
    </location>
</feature>
<feature type="binding site" evidence="1">
    <location>
        <position position="41"/>
    </location>
    <ligand>
        <name>Mg(2+)</name>
        <dbReference type="ChEBI" id="CHEBI:18420"/>
    </ligand>
</feature>
<feature type="binding site" evidence="1">
    <location>
        <position position="114"/>
    </location>
    <ligand>
        <name>Mg(2+)</name>
        <dbReference type="ChEBI" id="CHEBI:18420"/>
    </ligand>
</feature>
<feature type="binding site" evidence="1">
    <location>
        <position position="117"/>
    </location>
    <ligand>
        <name>Mg(2+)</name>
        <dbReference type="ChEBI" id="CHEBI:18420"/>
    </ligand>
</feature>